<feature type="chain" id="PRO_1000063851" description="3-isopropylmalate dehydratase small subunit">
    <location>
        <begin position="1"/>
        <end position="197"/>
    </location>
</feature>
<proteinExistence type="inferred from homology"/>
<sequence>MHQFTTWTGTTVPLMNDNIDTDQLLPKQFLKLIDKKGFGKYLLYAWRYLDDNYTDNPDFILNQPEYQGASILISGDNFGAGSSREHAAWALADYGFKVIIAGSFGDIHYNNDLNNGILPIIQPKEVRDQLAQLGPDQEITVDLADQLIRTPFGECPFDIEQDWKHKLLNGLDDIGITLQYQDLIAEYEDNRPSYWQN</sequence>
<organism>
    <name type="scientific">Streptococcus suis (strain 98HAH33)</name>
    <dbReference type="NCBI Taxonomy" id="391296"/>
    <lineage>
        <taxon>Bacteria</taxon>
        <taxon>Bacillati</taxon>
        <taxon>Bacillota</taxon>
        <taxon>Bacilli</taxon>
        <taxon>Lactobacillales</taxon>
        <taxon>Streptococcaceae</taxon>
        <taxon>Streptococcus</taxon>
    </lineage>
</organism>
<dbReference type="EC" id="4.2.1.33" evidence="1"/>
<dbReference type="EMBL" id="CP000408">
    <property type="protein sequence ID" value="ABP93109.1"/>
    <property type="molecule type" value="Genomic_DNA"/>
</dbReference>
<dbReference type="SMR" id="A4W420"/>
<dbReference type="KEGG" id="ssv:SSU98_1951"/>
<dbReference type="HOGENOM" id="CLU_081378_0_3_9"/>
<dbReference type="UniPathway" id="UPA00048">
    <property type="reaction ID" value="UER00071"/>
</dbReference>
<dbReference type="GO" id="GO:0009316">
    <property type="term" value="C:3-isopropylmalate dehydratase complex"/>
    <property type="evidence" value="ECO:0007669"/>
    <property type="project" value="InterPro"/>
</dbReference>
<dbReference type="GO" id="GO:0003861">
    <property type="term" value="F:3-isopropylmalate dehydratase activity"/>
    <property type="evidence" value="ECO:0007669"/>
    <property type="project" value="UniProtKB-UniRule"/>
</dbReference>
<dbReference type="GO" id="GO:0009098">
    <property type="term" value="P:L-leucine biosynthetic process"/>
    <property type="evidence" value="ECO:0007669"/>
    <property type="project" value="UniProtKB-UniRule"/>
</dbReference>
<dbReference type="CDD" id="cd01577">
    <property type="entry name" value="IPMI_Swivel"/>
    <property type="match status" value="1"/>
</dbReference>
<dbReference type="FunFam" id="3.20.19.10:FF:000003">
    <property type="entry name" value="3-isopropylmalate dehydratase small subunit"/>
    <property type="match status" value="1"/>
</dbReference>
<dbReference type="Gene3D" id="3.20.19.10">
    <property type="entry name" value="Aconitase, domain 4"/>
    <property type="match status" value="1"/>
</dbReference>
<dbReference type="HAMAP" id="MF_01031">
    <property type="entry name" value="LeuD_type1"/>
    <property type="match status" value="1"/>
</dbReference>
<dbReference type="InterPro" id="IPR004431">
    <property type="entry name" value="3-IsopropMal_deHydase_ssu"/>
</dbReference>
<dbReference type="InterPro" id="IPR015928">
    <property type="entry name" value="Aconitase/3IPM_dehydase_swvl"/>
</dbReference>
<dbReference type="InterPro" id="IPR000573">
    <property type="entry name" value="AconitaseA/IPMdHydase_ssu_swvl"/>
</dbReference>
<dbReference type="InterPro" id="IPR033940">
    <property type="entry name" value="IPMI_Swivel"/>
</dbReference>
<dbReference type="InterPro" id="IPR050075">
    <property type="entry name" value="LeuD"/>
</dbReference>
<dbReference type="NCBIfam" id="TIGR00171">
    <property type="entry name" value="leuD"/>
    <property type="match status" value="1"/>
</dbReference>
<dbReference type="NCBIfam" id="NF002458">
    <property type="entry name" value="PRK01641.1"/>
    <property type="match status" value="1"/>
</dbReference>
<dbReference type="PANTHER" id="PTHR43345:SF5">
    <property type="entry name" value="3-ISOPROPYLMALATE DEHYDRATASE SMALL SUBUNIT"/>
    <property type="match status" value="1"/>
</dbReference>
<dbReference type="PANTHER" id="PTHR43345">
    <property type="entry name" value="3-ISOPROPYLMALATE DEHYDRATASE SMALL SUBUNIT 2-RELATED-RELATED"/>
    <property type="match status" value="1"/>
</dbReference>
<dbReference type="Pfam" id="PF00694">
    <property type="entry name" value="Aconitase_C"/>
    <property type="match status" value="1"/>
</dbReference>
<dbReference type="SUPFAM" id="SSF52016">
    <property type="entry name" value="LeuD/IlvD-like"/>
    <property type="match status" value="1"/>
</dbReference>
<gene>
    <name evidence="1" type="primary">leuD</name>
    <name type="ordered locus">SSU98_1951</name>
</gene>
<accession>A4W420</accession>
<reference key="1">
    <citation type="journal article" date="2007" name="PLoS ONE">
        <title>A glimpse of streptococcal toxic shock syndrome from comparative genomics of S. suis 2 Chinese isolates.</title>
        <authorList>
            <person name="Chen C."/>
            <person name="Tang J."/>
            <person name="Dong W."/>
            <person name="Wang C."/>
            <person name="Feng Y."/>
            <person name="Wang J."/>
            <person name="Zheng F."/>
            <person name="Pan X."/>
            <person name="Liu D."/>
            <person name="Li M."/>
            <person name="Song Y."/>
            <person name="Zhu X."/>
            <person name="Sun H."/>
            <person name="Feng T."/>
            <person name="Guo Z."/>
            <person name="Ju A."/>
            <person name="Ge J."/>
            <person name="Dong Y."/>
            <person name="Sun W."/>
            <person name="Jiang Y."/>
            <person name="Wang J."/>
            <person name="Yan J."/>
            <person name="Yang H."/>
            <person name="Wang X."/>
            <person name="Gao G.F."/>
            <person name="Yang R."/>
            <person name="Wang J."/>
            <person name="Yu J."/>
        </authorList>
    </citation>
    <scope>NUCLEOTIDE SEQUENCE [LARGE SCALE GENOMIC DNA]</scope>
    <source>
        <strain>98HAH33</strain>
    </source>
</reference>
<comment type="function">
    <text evidence="1">Catalyzes the isomerization between 2-isopropylmalate and 3-isopropylmalate, via the formation of 2-isopropylmaleate.</text>
</comment>
<comment type="catalytic activity">
    <reaction evidence="1">
        <text>(2R,3S)-3-isopropylmalate = (2S)-2-isopropylmalate</text>
        <dbReference type="Rhea" id="RHEA:32287"/>
        <dbReference type="ChEBI" id="CHEBI:1178"/>
        <dbReference type="ChEBI" id="CHEBI:35121"/>
        <dbReference type="EC" id="4.2.1.33"/>
    </reaction>
</comment>
<comment type="pathway">
    <text evidence="1">Amino-acid biosynthesis; L-leucine biosynthesis; L-leucine from 3-methyl-2-oxobutanoate: step 2/4.</text>
</comment>
<comment type="subunit">
    <text evidence="1">Heterodimer of LeuC and LeuD.</text>
</comment>
<comment type="similarity">
    <text evidence="1">Belongs to the LeuD family. LeuD type 1 subfamily.</text>
</comment>
<name>LEUD_STRS2</name>
<evidence type="ECO:0000255" key="1">
    <source>
        <dbReference type="HAMAP-Rule" id="MF_01031"/>
    </source>
</evidence>
<keyword id="KW-0028">Amino-acid biosynthesis</keyword>
<keyword id="KW-0100">Branched-chain amino acid biosynthesis</keyword>
<keyword id="KW-0432">Leucine biosynthesis</keyword>
<keyword id="KW-0456">Lyase</keyword>
<protein>
    <recommendedName>
        <fullName evidence="1">3-isopropylmalate dehydratase small subunit</fullName>
        <ecNumber evidence="1">4.2.1.33</ecNumber>
    </recommendedName>
    <alternativeName>
        <fullName evidence="1">Alpha-IPM isomerase</fullName>
        <shortName evidence="1">IPMI</shortName>
    </alternativeName>
    <alternativeName>
        <fullName evidence="1">Isopropylmalate isomerase</fullName>
    </alternativeName>
</protein>